<organism>
    <name type="scientific">Yersinia pestis bv. Antiqua (strain Antiqua)</name>
    <dbReference type="NCBI Taxonomy" id="360102"/>
    <lineage>
        <taxon>Bacteria</taxon>
        <taxon>Pseudomonadati</taxon>
        <taxon>Pseudomonadota</taxon>
        <taxon>Gammaproteobacteria</taxon>
        <taxon>Enterobacterales</taxon>
        <taxon>Yersiniaceae</taxon>
        <taxon>Yersinia</taxon>
    </lineage>
</organism>
<name>HEM3_YERPA</name>
<feature type="chain" id="PRO_0000304297" description="Porphobilinogen deaminase">
    <location>
        <begin position="1"/>
        <end position="313"/>
    </location>
</feature>
<feature type="modified residue" description="S-(dipyrrolylmethanemethyl)cysteine" evidence="1">
    <location>
        <position position="242"/>
    </location>
</feature>
<keyword id="KW-0627">Porphyrin biosynthesis</keyword>
<keyword id="KW-0808">Transferase</keyword>
<comment type="function">
    <text evidence="1">Tetrapolymerization of the monopyrrole PBG into the hydroxymethylbilane pre-uroporphyrinogen in several discrete steps.</text>
</comment>
<comment type="catalytic activity">
    <reaction evidence="1">
        <text>4 porphobilinogen + H2O = hydroxymethylbilane + 4 NH4(+)</text>
        <dbReference type="Rhea" id="RHEA:13185"/>
        <dbReference type="ChEBI" id="CHEBI:15377"/>
        <dbReference type="ChEBI" id="CHEBI:28938"/>
        <dbReference type="ChEBI" id="CHEBI:57845"/>
        <dbReference type="ChEBI" id="CHEBI:58126"/>
        <dbReference type="EC" id="2.5.1.61"/>
    </reaction>
</comment>
<comment type="cofactor">
    <cofactor evidence="1">
        <name>dipyrromethane</name>
        <dbReference type="ChEBI" id="CHEBI:60342"/>
    </cofactor>
    <text evidence="1">Binds 1 dipyrromethane group covalently.</text>
</comment>
<comment type="pathway">
    <text evidence="1">Porphyrin-containing compound metabolism; protoporphyrin-IX biosynthesis; coproporphyrinogen-III from 5-aminolevulinate: step 2/4.</text>
</comment>
<comment type="subunit">
    <text evidence="1">Monomer.</text>
</comment>
<comment type="miscellaneous">
    <text evidence="1">The porphobilinogen subunits are added to the dipyrromethane group.</text>
</comment>
<comment type="similarity">
    <text evidence="1">Belongs to the HMBS family.</text>
</comment>
<reference key="1">
    <citation type="journal article" date="2006" name="J. Bacteriol.">
        <title>Complete genome sequence of Yersinia pestis strains Antiqua and Nepal516: evidence of gene reduction in an emerging pathogen.</title>
        <authorList>
            <person name="Chain P.S.G."/>
            <person name="Hu P."/>
            <person name="Malfatti S.A."/>
            <person name="Radnedge L."/>
            <person name="Larimer F."/>
            <person name="Vergez L.M."/>
            <person name="Worsham P."/>
            <person name="Chu M.C."/>
            <person name="Andersen G.L."/>
        </authorList>
    </citation>
    <scope>NUCLEOTIDE SEQUENCE [LARGE SCALE GENOMIC DNA]</scope>
    <source>
        <strain>Antiqua</strain>
    </source>
</reference>
<accession>Q1CBN1</accession>
<gene>
    <name evidence="1" type="primary">hemC</name>
    <name type="ordered locus">YPA_0172</name>
</gene>
<proteinExistence type="inferred from homology"/>
<dbReference type="EC" id="2.5.1.61" evidence="1"/>
<dbReference type="EMBL" id="CP000308">
    <property type="protein sequence ID" value="ABG12141.1"/>
    <property type="molecule type" value="Genomic_DNA"/>
</dbReference>
<dbReference type="RefSeq" id="WP_002211465.1">
    <property type="nucleotide sequence ID" value="NZ_CP009906.1"/>
</dbReference>
<dbReference type="SMR" id="Q1CBN1"/>
<dbReference type="GeneID" id="57974860"/>
<dbReference type="KEGG" id="ypa:YPA_0172"/>
<dbReference type="UniPathway" id="UPA00251">
    <property type="reaction ID" value="UER00319"/>
</dbReference>
<dbReference type="Proteomes" id="UP000001971">
    <property type="component" value="Chromosome"/>
</dbReference>
<dbReference type="GO" id="GO:0005737">
    <property type="term" value="C:cytoplasm"/>
    <property type="evidence" value="ECO:0007669"/>
    <property type="project" value="TreeGrafter"/>
</dbReference>
<dbReference type="GO" id="GO:0004418">
    <property type="term" value="F:hydroxymethylbilane synthase activity"/>
    <property type="evidence" value="ECO:0007669"/>
    <property type="project" value="UniProtKB-UniRule"/>
</dbReference>
<dbReference type="GO" id="GO:0006782">
    <property type="term" value="P:protoporphyrinogen IX biosynthetic process"/>
    <property type="evidence" value="ECO:0007669"/>
    <property type="project" value="UniProtKB-UniRule"/>
</dbReference>
<dbReference type="CDD" id="cd13646">
    <property type="entry name" value="PBP2_EcHMBS_like"/>
    <property type="match status" value="1"/>
</dbReference>
<dbReference type="FunFam" id="3.30.160.40:FF:000002">
    <property type="entry name" value="Porphobilinogen deaminase"/>
    <property type="match status" value="1"/>
</dbReference>
<dbReference type="FunFam" id="3.40.190.10:FF:000004">
    <property type="entry name" value="Porphobilinogen deaminase"/>
    <property type="match status" value="1"/>
</dbReference>
<dbReference type="FunFam" id="3.40.190.10:FF:000005">
    <property type="entry name" value="Porphobilinogen deaminase"/>
    <property type="match status" value="1"/>
</dbReference>
<dbReference type="Gene3D" id="3.40.190.10">
    <property type="entry name" value="Periplasmic binding protein-like II"/>
    <property type="match status" value="2"/>
</dbReference>
<dbReference type="Gene3D" id="3.30.160.40">
    <property type="entry name" value="Porphobilinogen deaminase, C-terminal domain"/>
    <property type="match status" value="1"/>
</dbReference>
<dbReference type="HAMAP" id="MF_00260">
    <property type="entry name" value="Porphobil_deam"/>
    <property type="match status" value="1"/>
</dbReference>
<dbReference type="InterPro" id="IPR000860">
    <property type="entry name" value="HemC"/>
</dbReference>
<dbReference type="InterPro" id="IPR022419">
    <property type="entry name" value="Porphobilin_deaminase_cofac_BS"/>
</dbReference>
<dbReference type="InterPro" id="IPR022417">
    <property type="entry name" value="Porphobilin_deaminase_N"/>
</dbReference>
<dbReference type="InterPro" id="IPR022418">
    <property type="entry name" value="Porphobilinogen_deaminase_C"/>
</dbReference>
<dbReference type="InterPro" id="IPR036803">
    <property type="entry name" value="Porphobilinogen_deaminase_C_sf"/>
</dbReference>
<dbReference type="NCBIfam" id="TIGR00212">
    <property type="entry name" value="hemC"/>
    <property type="match status" value="1"/>
</dbReference>
<dbReference type="PANTHER" id="PTHR11557">
    <property type="entry name" value="PORPHOBILINOGEN DEAMINASE"/>
    <property type="match status" value="1"/>
</dbReference>
<dbReference type="PANTHER" id="PTHR11557:SF0">
    <property type="entry name" value="PORPHOBILINOGEN DEAMINASE"/>
    <property type="match status" value="1"/>
</dbReference>
<dbReference type="Pfam" id="PF01379">
    <property type="entry name" value="Porphobil_deam"/>
    <property type="match status" value="1"/>
</dbReference>
<dbReference type="Pfam" id="PF03900">
    <property type="entry name" value="Porphobil_deamC"/>
    <property type="match status" value="1"/>
</dbReference>
<dbReference type="PIRSF" id="PIRSF001438">
    <property type="entry name" value="4pyrrol_synth_OHMeBilane_synth"/>
    <property type="match status" value="1"/>
</dbReference>
<dbReference type="PRINTS" id="PR00151">
    <property type="entry name" value="PORPHBDMNASE"/>
</dbReference>
<dbReference type="SUPFAM" id="SSF53850">
    <property type="entry name" value="Periplasmic binding protein-like II"/>
    <property type="match status" value="1"/>
</dbReference>
<dbReference type="SUPFAM" id="SSF54782">
    <property type="entry name" value="Porphobilinogen deaminase (hydroxymethylbilane synthase), C-terminal domain"/>
    <property type="match status" value="1"/>
</dbReference>
<dbReference type="PROSITE" id="PS00533">
    <property type="entry name" value="PORPHOBILINOGEN_DEAM"/>
    <property type="match status" value="1"/>
</dbReference>
<evidence type="ECO:0000255" key="1">
    <source>
        <dbReference type="HAMAP-Rule" id="MF_00260"/>
    </source>
</evidence>
<sequence>MLDKIIRIATRQSPLALWQAHYVQHLLQANHPGLQIELVPMVTRGDIILDTPLAKVGGKGLFVKELELALLDGRADIAVHSMKDVPIAFPEGLGLVTICEREDPRDAFVSSHYAHLDDLPAGSVVGTSSLRRQCQLRERRPDLIIRDLRGNVGTRLAKLDNGDYQAIILAVAGLKRLGLENRIRYAMSAEESLPAVGQGAVGIECRLDDDHTRQLLAPLNHRHTELRVCAERAMNIRLEGGCQVPIGSYAELEGDTLWLRALVGAPDGSQMIRGERRGPAAEAEQMGIELADELLSRGAREILAAVYLDNPAR</sequence>
<protein>
    <recommendedName>
        <fullName evidence="1">Porphobilinogen deaminase</fullName>
        <shortName evidence="1">PBG</shortName>
        <ecNumber evidence="1">2.5.1.61</ecNumber>
    </recommendedName>
    <alternativeName>
        <fullName evidence="1">Hydroxymethylbilane synthase</fullName>
        <shortName evidence="1">HMBS</shortName>
    </alternativeName>
    <alternativeName>
        <fullName evidence="1">Pre-uroporphyrinogen synthase</fullName>
    </alternativeName>
</protein>